<organism>
    <name type="scientific">Pseudomonas fluorescens (strain SBW25)</name>
    <dbReference type="NCBI Taxonomy" id="216595"/>
    <lineage>
        <taxon>Bacteria</taxon>
        <taxon>Pseudomonadati</taxon>
        <taxon>Pseudomonadota</taxon>
        <taxon>Gammaproteobacteria</taxon>
        <taxon>Pseudomonadales</taxon>
        <taxon>Pseudomonadaceae</taxon>
        <taxon>Pseudomonas</taxon>
    </lineage>
</organism>
<feature type="chain" id="PRO_1000212572" description="Leucyl/phenylalanyl-tRNA--protein transferase">
    <location>
        <begin position="1"/>
        <end position="226"/>
    </location>
</feature>
<protein>
    <recommendedName>
        <fullName evidence="1">Leucyl/phenylalanyl-tRNA--protein transferase</fullName>
        <ecNumber evidence="1">2.3.2.6</ecNumber>
    </recommendedName>
    <alternativeName>
        <fullName evidence="1">L/F-transferase</fullName>
    </alternativeName>
    <alternativeName>
        <fullName evidence="1">Leucyltransferase</fullName>
    </alternativeName>
    <alternativeName>
        <fullName evidence="1">Phenyalanyltransferase</fullName>
    </alternativeName>
</protein>
<name>LFTR_PSEFS</name>
<dbReference type="EC" id="2.3.2.6" evidence="1"/>
<dbReference type="EMBL" id="AM181176">
    <property type="protein sequence ID" value="CAY50108.1"/>
    <property type="molecule type" value="Genomic_DNA"/>
</dbReference>
<dbReference type="RefSeq" id="WP_012724938.1">
    <property type="nucleotide sequence ID" value="NC_012660.1"/>
</dbReference>
<dbReference type="SMR" id="C3JY59"/>
<dbReference type="STRING" id="294.SRM1_03429"/>
<dbReference type="GeneID" id="93465151"/>
<dbReference type="PATRIC" id="fig|216595.4.peg.3947"/>
<dbReference type="eggNOG" id="COG2360">
    <property type="taxonomic scope" value="Bacteria"/>
</dbReference>
<dbReference type="HOGENOM" id="CLU_075045_0_0_6"/>
<dbReference type="OrthoDB" id="9790282at2"/>
<dbReference type="GO" id="GO:0005737">
    <property type="term" value="C:cytoplasm"/>
    <property type="evidence" value="ECO:0007669"/>
    <property type="project" value="UniProtKB-SubCell"/>
</dbReference>
<dbReference type="GO" id="GO:0008914">
    <property type="term" value="F:leucyl-tRNA--protein transferase activity"/>
    <property type="evidence" value="ECO:0007669"/>
    <property type="project" value="UniProtKB-UniRule"/>
</dbReference>
<dbReference type="GO" id="GO:0030163">
    <property type="term" value="P:protein catabolic process"/>
    <property type="evidence" value="ECO:0007669"/>
    <property type="project" value="UniProtKB-UniRule"/>
</dbReference>
<dbReference type="FunFam" id="3.30.70.3550:FF:000001">
    <property type="entry name" value="Leucyl/phenylalanyl-tRNA--protein transferase"/>
    <property type="match status" value="1"/>
</dbReference>
<dbReference type="FunFam" id="3.40.630.70:FF:000001">
    <property type="entry name" value="Leucyl/phenylalanyl-tRNA--protein transferase"/>
    <property type="match status" value="1"/>
</dbReference>
<dbReference type="Gene3D" id="3.40.630.70">
    <property type="entry name" value="Leucyl/phenylalanyl-tRNA-protein transferase, C-terminal domain"/>
    <property type="match status" value="1"/>
</dbReference>
<dbReference type="Gene3D" id="3.30.70.3550">
    <property type="entry name" value="Leucyl/phenylalanyl-tRNA-protein transferase, N-terminal domain"/>
    <property type="match status" value="1"/>
</dbReference>
<dbReference type="HAMAP" id="MF_00688">
    <property type="entry name" value="Leu_Phe_trans"/>
    <property type="match status" value="1"/>
</dbReference>
<dbReference type="InterPro" id="IPR016181">
    <property type="entry name" value="Acyl_CoA_acyltransferase"/>
</dbReference>
<dbReference type="InterPro" id="IPR004616">
    <property type="entry name" value="Leu/Phe-tRNA_Trfase"/>
</dbReference>
<dbReference type="InterPro" id="IPR042203">
    <property type="entry name" value="Leu/Phe-tRNA_Trfase_C"/>
</dbReference>
<dbReference type="InterPro" id="IPR042221">
    <property type="entry name" value="Leu/Phe-tRNA_Trfase_N"/>
</dbReference>
<dbReference type="NCBIfam" id="TIGR00667">
    <property type="entry name" value="aat"/>
    <property type="match status" value="1"/>
</dbReference>
<dbReference type="PANTHER" id="PTHR30098">
    <property type="entry name" value="LEUCYL/PHENYLALANYL-TRNA--PROTEIN TRANSFERASE"/>
    <property type="match status" value="1"/>
</dbReference>
<dbReference type="PANTHER" id="PTHR30098:SF2">
    <property type="entry name" value="LEUCYL_PHENYLALANYL-TRNA--PROTEIN TRANSFERASE"/>
    <property type="match status" value="1"/>
</dbReference>
<dbReference type="Pfam" id="PF03588">
    <property type="entry name" value="Leu_Phe_trans"/>
    <property type="match status" value="1"/>
</dbReference>
<dbReference type="SUPFAM" id="SSF55729">
    <property type="entry name" value="Acyl-CoA N-acyltransferases (Nat)"/>
    <property type="match status" value="1"/>
</dbReference>
<keyword id="KW-0012">Acyltransferase</keyword>
<keyword id="KW-0963">Cytoplasm</keyword>
<keyword id="KW-0808">Transferase</keyword>
<proteinExistence type="inferred from homology"/>
<comment type="function">
    <text evidence="1">Functions in the N-end rule pathway of protein degradation where it conjugates Leu, Phe and, less efficiently, Met from aminoacyl-tRNAs to the N-termini of proteins containing an N-terminal arginine or lysine.</text>
</comment>
<comment type="catalytic activity">
    <reaction evidence="1">
        <text>N-terminal L-lysyl-[protein] + L-leucyl-tRNA(Leu) = N-terminal L-leucyl-L-lysyl-[protein] + tRNA(Leu) + H(+)</text>
        <dbReference type="Rhea" id="RHEA:12340"/>
        <dbReference type="Rhea" id="RHEA-COMP:9613"/>
        <dbReference type="Rhea" id="RHEA-COMP:9622"/>
        <dbReference type="Rhea" id="RHEA-COMP:12670"/>
        <dbReference type="Rhea" id="RHEA-COMP:12671"/>
        <dbReference type="ChEBI" id="CHEBI:15378"/>
        <dbReference type="ChEBI" id="CHEBI:65249"/>
        <dbReference type="ChEBI" id="CHEBI:78442"/>
        <dbReference type="ChEBI" id="CHEBI:78494"/>
        <dbReference type="ChEBI" id="CHEBI:133043"/>
        <dbReference type="EC" id="2.3.2.6"/>
    </reaction>
</comment>
<comment type="catalytic activity">
    <reaction evidence="1">
        <text>N-terminal L-arginyl-[protein] + L-leucyl-tRNA(Leu) = N-terminal L-leucyl-L-arginyl-[protein] + tRNA(Leu) + H(+)</text>
        <dbReference type="Rhea" id="RHEA:50416"/>
        <dbReference type="Rhea" id="RHEA-COMP:9613"/>
        <dbReference type="Rhea" id="RHEA-COMP:9622"/>
        <dbReference type="Rhea" id="RHEA-COMP:12672"/>
        <dbReference type="Rhea" id="RHEA-COMP:12673"/>
        <dbReference type="ChEBI" id="CHEBI:15378"/>
        <dbReference type="ChEBI" id="CHEBI:64719"/>
        <dbReference type="ChEBI" id="CHEBI:78442"/>
        <dbReference type="ChEBI" id="CHEBI:78494"/>
        <dbReference type="ChEBI" id="CHEBI:133044"/>
        <dbReference type="EC" id="2.3.2.6"/>
    </reaction>
</comment>
<comment type="catalytic activity">
    <reaction evidence="1">
        <text>L-phenylalanyl-tRNA(Phe) + an N-terminal L-alpha-aminoacyl-[protein] = an N-terminal L-phenylalanyl-L-alpha-aminoacyl-[protein] + tRNA(Phe)</text>
        <dbReference type="Rhea" id="RHEA:43632"/>
        <dbReference type="Rhea" id="RHEA-COMP:9668"/>
        <dbReference type="Rhea" id="RHEA-COMP:9699"/>
        <dbReference type="Rhea" id="RHEA-COMP:10636"/>
        <dbReference type="Rhea" id="RHEA-COMP:10637"/>
        <dbReference type="ChEBI" id="CHEBI:78442"/>
        <dbReference type="ChEBI" id="CHEBI:78531"/>
        <dbReference type="ChEBI" id="CHEBI:78597"/>
        <dbReference type="ChEBI" id="CHEBI:83561"/>
        <dbReference type="EC" id="2.3.2.6"/>
    </reaction>
</comment>
<comment type="subcellular location">
    <subcellularLocation>
        <location evidence="1">Cytoplasm</location>
    </subcellularLocation>
</comment>
<comment type="similarity">
    <text evidence="1">Belongs to the L/F-transferase family.</text>
</comment>
<evidence type="ECO:0000255" key="1">
    <source>
        <dbReference type="HAMAP-Rule" id="MF_00688"/>
    </source>
</evidence>
<sequence length="226" mass="25347">MLTWLQRDSLTFPPLAKAMREPNGLLAAGGDLSAERLIQAYRHGCFPWFSQGQPILWWSPDPRTVIFPDELHISRSLGKLLRQQRYTVTFDQDFAAVIQACAAPRAYADGTWITQSIQNAYLALHQRGYAHSVEVWDNGELVGGLYGLAMGQLFFGESMFSRADNASKFGFATLTRQLQAWGFVLIDCQMPNDHLHSLGARAISRSDFAGFLRDHLDQPNTGPWVS</sequence>
<reference key="1">
    <citation type="journal article" date="2009" name="Genome Biol.">
        <title>Genomic and genetic analyses of diversity and plant interactions of Pseudomonas fluorescens.</title>
        <authorList>
            <person name="Silby M.W."/>
            <person name="Cerdeno-Tarraga A.M."/>
            <person name="Vernikos G.S."/>
            <person name="Giddens S.R."/>
            <person name="Jackson R.W."/>
            <person name="Preston G.M."/>
            <person name="Zhang X.-X."/>
            <person name="Moon C.D."/>
            <person name="Gehrig S.M."/>
            <person name="Godfrey S.A.C."/>
            <person name="Knight C.G."/>
            <person name="Malone J.G."/>
            <person name="Robinson Z."/>
            <person name="Spiers A.J."/>
            <person name="Harris S."/>
            <person name="Challis G.L."/>
            <person name="Yaxley A.M."/>
            <person name="Harris D."/>
            <person name="Seeger K."/>
            <person name="Murphy L."/>
            <person name="Rutter S."/>
            <person name="Squares R."/>
            <person name="Quail M.A."/>
            <person name="Saunders E."/>
            <person name="Mavromatis K."/>
            <person name="Brettin T.S."/>
            <person name="Bentley S.D."/>
            <person name="Hothersall J."/>
            <person name="Stephens E."/>
            <person name="Thomas C.M."/>
            <person name="Parkhill J."/>
            <person name="Levy S.B."/>
            <person name="Rainey P.B."/>
            <person name="Thomson N.R."/>
        </authorList>
    </citation>
    <scope>NUCLEOTIDE SEQUENCE [LARGE SCALE GENOMIC DNA]</scope>
    <source>
        <strain>SBW25</strain>
    </source>
</reference>
<accession>C3JY59</accession>
<gene>
    <name evidence="1" type="primary">aat</name>
    <name type="ordered locus">PFLU_3802</name>
</gene>